<protein>
    <recommendedName>
        <fullName>Kappa-casein</fullName>
    </recommendedName>
</protein>
<comment type="function">
    <text>Kappa-casein stabilizes micelle formation, preventing casein precipitation in milk.</text>
</comment>
<comment type="subcellular location">
    <subcellularLocation>
        <location>Secreted</location>
    </subcellularLocation>
</comment>
<comment type="tissue specificity">
    <text>Mammary gland specific. Secreted in milk.</text>
</comment>
<comment type="similarity">
    <text evidence="5">Belongs to the kappa-casein family.</text>
</comment>
<gene>
    <name type="primary">CSN3</name>
    <name type="synonym">CSN10</name>
    <name type="synonym">CSNK</name>
</gene>
<dbReference type="EMBL" id="U37506">
    <property type="protein sequence ID" value="AAC48655.1"/>
    <property type="molecule type" value="Genomic_DNA"/>
</dbReference>
<dbReference type="GlyCosmos" id="Q95184">
    <property type="glycosylation" value="6 sites, No reported glycans"/>
</dbReference>
<dbReference type="GO" id="GO:0005615">
    <property type="term" value="C:extracellular space"/>
    <property type="evidence" value="ECO:0007669"/>
    <property type="project" value="TreeGrafter"/>
</dbReference>
<dbReference type="GO" id="GO:0007595">
    <property type="term" value="P:lactation"/>
    <property type="evidence" value="ECO:0007669"/>
    <property type="project" value="TreeGrafter"/>
</dbReference>
<dbReference type="GO" id="GO:0050821">
    <property type="term" value="P:protein stabilization"/>
    <property type="evidence" value="ECO:0007669"/>
    <property type="project" value="TreeGrafter"/>
</dbReference>
<dbReference type="InterPro" id="IPR000117">
    <property type="entry name" value="Casein_kappa"/>
</dbReference>
<dbReference type="PANTHER" id="PTHR11470">
    <property type="entry name" value="KAPPA CASEIN"/>
    <property type="match status" value="1"/>
</dbReference>
<dbReference type="PANTHER" id="PTHR11470:SF2">
    <property type="entry name" value="KAPPA-CASEIN"/>
    <property type="match status" value="1"/>
</dbReference>
<dbReference type="Pfam" id="PF00997">
    <property type="entry name" value="Casein_kappa"/>
    <property type="match status" value="1"/>
</dbReference>
<feature type="chain" id="PRO_0000144108" description="Kappa-casein">
    <location>
        <begin position="1" status="less than"/>
        <end position="122"/>
    </location>
</feature>
<feature type="region of interest" description="Disordered" evidence="4">
    <location>
        <begin position="100"/>
        <end position="122"/>
    </location>
</feature>
<feature type="site" description="Cleavage; by chymosin/rennin" evidence="1">
    <location>
        <begin position="58"/>
        <end position="59"/>
    </location>
</feature>
<feature type="modified residue" description="Phosphothreonine" evidence="2">
    <location>
        <position position="98"/>
    </location>
</feature>
<feature type="modified residue" description="Phosphoserine; alternate" evidence="2">
    <location>
        <position position="102"/>
    </location>
</feature>
<feature type="modified residue" description="Phosphoserine" evidence="3">
    <location>
        <position position="119"/>
    </location>
</feature>
<feature type="glycosylation site" description="O-linked (GalNAc...) threonine" evidence="2">
    <location>
        <position position="84"/>
    </location>
</feature>
<feature type="glycosylation site" description="O-linked (GalNAc...) threonine" evidence="2">
    <location>
        <position position="86"/>
    </location>
</feature>
<feature type="glycosylation site" description="O-linked (GalNAc...) threonine" evidence="2">
    <location>
        <position position="89"/>
    </location>
</feature>
<feature type="glycosylation site" description="O-linked (GalNAc...) threonine" evidence="2">
    <location>
        <position position="95"/>
    </location>
</feature>
<feature type="glycosylation site" description="O-linked (GalNAc...) serine; alternate" evidence="2">
    <location>
        <position position="102"/>
    </location>
</feature>
<feature type="glycosylation site" description="O-linked (GalNAc...) threonine" evidence="2">
    <location>
        <position position="118"/>
    </location>
</feature>
<feature type="non-terminal residue">
    <location>
        <position position="1"/>
    </location>
</feature>
<reference key="1">
    <citation type="journal article" date="1996" name="Mol. Phylogenet. Evol.">
        <title>K-casein gene phylogeny of higher ruminants (Pecora, Artiodactyla).</title>
        <authorList>
            <person name="Cronin M.A."/>
            <person name="Stuart R."/>
            <person name="Pierson B.J."/>
            <person name="Patton J.C."/>
        </authorList>
    </citation>
    <scope>NUCLEOTIDE SEQUENCE [GENOMIC DNA]</scope>
</reference>
<name>CASK_ELADA</name>
<sequence>VALINNQFLPYPYYAKPGAVRSPAQILQWQVLPNTVPAKFCQPQPTTMARHPHPRLSFMAIPPKKNQDKTDIPSINTIATAESTITPTTEAIVDTVATQEASSEVIESAPEAKTDQVTSTVV</sequence>
<accession>Q95184</accession>
<organism>
    <name type="scientific">Elaphurus davidianus</name>
    <name type="common">Pere David's deer</name>
    <dbReference type="NCBI Taxonomy" id="43332"/>
    <lineage>
        <taxon>Eukaryota</taxon>
        <taxon>Metazoa</taxon>
        <taxon>Chordata</taxon>
        <taxon>Craniata</taxon>
        <taxon>Vertebrata</taxon>
        <taxon>Euteleostomi</taxon>
        <taxon>Mammalia</taxon>
        <taxon>Eutheria</taxon>
        <taxon>Laurasiatheria</taxon>
        <taxon>Artiodactyla</taxon>
        <taxon>Ruminantia</taxon>
        <taxon>Pecora</taxon>
        <taxon>Cervidae</taxon>
        <taxon>Cervinae</taxon>
        <taxon>Elaphurus</taxon>
    </lineage>
</organism>
<evidence type="ECO:0000250" key="1"/>
<evidence type="ECO:0000250" key="2">
    <source>
        <dbReference type="UniProtKB" id="P02668"/>
    </source>
</evidence>
<evidence type="ECO:0000250" key="3">
    <source>
        <dbReference type="UniProtKB" id="P02670"/>
    </source>
</evidence>
<evidence type="ECO:0000256" key="4">
    <source>
        <dbReference type="SAM" id="MobiDB-lite"/>
    </source>
</evidence>
<evidence type="ECO:0000305" key="5"/>
<keyword id="KW-0325">Glycoprotein</keyword>
<keyword id="KW-0494">Milk protein</keyword>
<keyword id="KW-0597">Phosphoprotein</keyword>
<keyword id="KW-0964">Secreted</keyword>
<proteinExistence type="evidence at transcript level"/>